<protein>
    <recommendedName>
        <fullName evidence="1">Nucleoside diphosphate kinase</fullName>
        <shortName evidence="1">NDK</shortName>
        <shortName evidence="1">NDP kinase</shortName>
        <ecNumber evidence="1">2.7.4.6</ecNumber>
    </recommendedName>
    <alternativeName>
        <fullName evidence="1">Nucleoside-2-P kinase</fullName>
    </alternativeName>
</protein>
<organism>
    <name type="scientific">Dinoroseobacter shibae (strain DSM 16493 / NCIMB 14021 / DFL 12)</name>
    <dbReference type="NCBI Taxonomy" id="398580"/>
    <lineage>
        <taxon>Bacteria</taxon>
        <taxon>Pseudomonadati</taxon>
        <taxon>Pseudomonadota</taxon>
        <taxon>Alphaproteobacteria</taxon>
        <taxon>Rhodobacterales</taxon>
        <taxon>Roseobacteraceae</taxon>
        <taxon>Dinoroseobacter</taxon>
    </lineage>
</organism>
<proteinExistence type="inferred from homology"/>
<dbReference type="EC" id="2.7.4.6" evidence="1"/>
<dbReference type="EMBL" id="CP000830">
    <property type="protein sequence ID" value="ABV93092.1"/>
    <property type="molecule type" value="Genomic_DNA"/>
</dbReference>
<dbReference type="RefSeq" id="WP_012178022.1">
    <property type="nucleotide sequence ID" value="NC_009952.1"/>
</dbReference>
<dbReference type="SMR" id="A8LIX8"/>
<dbReference type="STRING" id="398580.Dshi_1350"/>
<dbReference type="KEGG" id="dsh:Dshi_1350"/>
<dbReference type="eggNOG" id="COG0105">
    <property type="taxonomic scope" value="Bacteria"/>
</dbReference>
<dbReference type="HOGENOM" id="CLU_060216_8_1_5"/>
<dbReference type="OrthoDB" id="9801161at2"/>
<dbReference type="Proteomes" id="UP000006833">
    <property type="component" value="Chromosome"/>
</dbReference>
<dbReference type="GO" id="GO:0005737">
    <property type="term" value="C:cytoplasm"/>
    <property type="evidence" value="ECO:0007669"/>
    <property type="project" value="UniProtKB-SubCell"/>
</dbReference>
<dbReference type="GO" id="GO:0005524">
    <property type="term" value="F:ATP binding"/>
    <property type="evidence" value="ECO:0007669"/>
    <property type="project" value="UniProtKB-UniRule"/>
</dbReference>
<dbReference type="GO" id="GO:0046872">
    <property type="term" value="F:metal ion binding"/>
    <property type="evidence" value="ECO:0007669"/>
    <property type="project" value="UniProtKB-KW"/>
</dbReference>
<dbReference type="GO" id="GO:0004550">
    <property type="term" value="F:nucleoside diphosphate kinase activity"/>
    <property type="evidence" value="ECO:0007669"/>
    <property type="project" value="UniProtKB-UniRule"/>
</dbReference>
<dbReference type="GO" id="GO:0006241">
    <property type="term" value="P:CTP biosynthetic process"/>
    <property type="evidence" value="ECO:0007669"/>
    <property type="project" value="UniProtKB-UniRule"/>
</dbReference>
<dbReference type="GO" id="GO:0006183">
    <property type="term" value="P:GTP biosynthetic process"/>
    <property type="evidence" value="ECO:0007669"/>
    <property type="project" value="UniProtKB-UniRule"/>
</dbReference>
<dbReference type="GO" id="GO:0006228">
    <property type="term" value="P:UTP biosynthetic process"/>
    <property type="evidence" value="ECO:0007669"/>
    <property type="project" value="UniProtKB-UniRule"/>
</dbReference>
<dbReference type="CDD" id="cd04413">
    <property type="entry name" value="NDPk_I"/>
    <property type="match status" value="1"/>
</dbReference>
<dbReference type="FunFam" id="3.30.70.141:FF:000001">
    <property type="entry name" value="Nucleoside diphosphate kinase"/>
    <property type="match status" value="1"/>
</dbReference>
<dbReference type="Gene3D" id="3.30.70.141">
    <property type="entry name" value="Nucleoside diphosphate kinase-like domain"/>
    <property type="match status" value="1"/>
</dbReference>
<dbReference type="HAMAP" id="MF_00451">
    <property type="entry name" value="NDP_kinase"/>
    <property type="match status" value="1"/>
</dbReference>
<dbReference type="InterPro" id="IPR034907">
    <property type="entry name" value="NDK-like_dom"/>
</dbReference>
<dbReference type="InterPro" id="IPR036850">
    <property type="entry name" value="NDK-like_dom_sf"/>
</dbReference>
<dbReference type="InterPro" id="IPR001564">
    <property type="entry name" value="Nucleoside_diP_kinase"/>
</dbReference>
<dbReference type="InterPro" id="IPR023005">
    <property type="entry name" value="Nucleoside_diP_kinase_AS"/>
</dbReference>
<dbReference type="NCBIfam" id="NF001908">
    <property type="entry name" value="PRK00668.1"/>
    <property type="match status" value="1"/>
</dbReference>
<dbReference type="PANTHER" id="PTHR46161">
    <property type="entry name" value="NUCLEOSIDE DIPHOSPHATE KINASE"/>
    <property type="match status" value="1"/>
</dbReference>
<dbReference type="PANTHER" id="PTHR46161:SF3">
    <property type="entry name" value="NUCLEOSIDE DIPHOSPHATE KINASE DDB_G0292928-RELATED"/>
    <property type="match status" value="1"/>
</dbReference>
<dbReference type="Pfam" id="PF00334">
    <property type="entry name" value="NDK"/>
    <property type="match status" value="1"/>
</dbReference>
<dbReference type="PRINTS" id="PR01243">
    <property type="entry name" value="NUCDPKINASE"/>
</dbReference>
<dbReference type="SMART" id="SM00562">
    <property type="entry name" value="NDK"/>
    <property type="match status" value="1"/>
</dbReference>
<dbReference type="SUPFAM" id="SSF54919">
    <property type="entry name" value="Nucleoside diphosphate kinase, NDK"/>
    <property type="match status" value="1"/>
</dbReference>
<dbReference type="PROSITE" id="PS00469">
    <property type="entry name" value="NDPK"/>
    <property type="match status" value="1"/>
</dbReference>
<dbReference type="PROSITE" id="PS51374">
    <property type="entry name" value="NDPK_LIKE"/>
    <property type="match status" value="1"/>
</dbReference>
<comment type="function">
    <text evidence="1">Major role in the synthesis of nucleoside triphosphates other than ATP. The ATP gamma phosphate is transferred to the NDP beta phosphate via a ping-pong mechanism, using a phosphorylated active-site intermediate.</text>
</comment>
<comment type="catalytic activity">
    <reaction evidence="1">
        <text>a 2'-deoxyribonucleoside 5'-diphosphate + ATP = a 2'-deoxyribonucleoside 5'-triphosphate + ADP</text>
        <dbReference type="Rhea" id="RHEA:44640"/>
        <dbReference type="ChEBI" id="CHEBI:30616"/>
        <dbReference type="ChEBI" id="CHEBI:61560"/>
        <dbReference type="ChEBI" id="CHEBI:73316"/>
        <dbReference type="ChEBI" id="CHEBI:456216"/>
        <dbReference type="EC" id="2.7.4.6"/>
    </reaction>
</comment>
<comment type="catalytic activity">
    <reaction evidence="1">
        <text>a ribonucleoside 5'-diphosphate + ATP = a ribonucleoside 5'-triphosphate + ADP</text>
        <dbReference type="Rhea" id="RHEA:18113"/>
        <dbReference type="ChEBI" id="CHEBI:30616"/>
        <dbReference type="ChEBI" id="CHEBI:57930"/>
        <dbReference type="ChEBI" id="CHEBI:61557"/>
        <dbReference type="ChEBI" id="CHEBI:456216"/>
        <dbReference type="EC" id="2.7.4.6"/>
    </reaction>
</comment>
<comment type="cofactor">
    <cofactor evidence="1">
        <name>Mg(2+)</name>
        <dbReference type="ChEBI" id="CHEBI:18420"/>
    </cofactor>
</comment>
<comment type="subunit">
    <text evidence="1">Homotetramer.</text>
</comment>
<comment type="subcellular location">
    <subcellularLocation>
        <location evidence="1">Cytoplasm</location>
    </subcellularLocation>
</comment>
<comment type="similarity">
    <text evidence="1">Belongs to the NDK family.</text>
</comment>
<reference key="1">
    <citation type="journal article" date="2010" name="ISME J.">
        <title>The complete genome sequence of the algal symbiont Dinoroseobacter shibae: a hitchhiker's guide to life in the sea.</title>
        <authorList>
            <person name="Wagner-Dobler I."/>
            <person name="Ballhausen B."/>
            <person name="Berger M."/>
            <person name="Brinkhoff T."/>
            <person name="Buchholz I."/>
            <person name="Bunk B."/>
            <person name="Cypionka H."/>
            <person name="Daniel R."/>
            <person name="Drepper T."/>
            <person name="Gerdts G."/>
            <person name="Hahnke S."/>
            <person name="Han C."/>
            <person name="Jahn D."/>
            <person name="Kalhoefer D."/>
            <person name="Kiss H."/>
            <person name="Klenk H.P."/>
            <person name="Kyrpides N."/>
            <person name="Liebl W."/>
            <person name="Liesegang H."/>
            <person name="Meincke L."/>
            <person name="Pati A."/>
            <person name="Petersen J."/>
            <person name="Piekarski T."/>
            <person name="Pommerenke C."/>
            <person name="Pradella S."/>
            <person name="Pukall R."/>
            <person name="Rabus R."/>
            <person name="Stackebrandt E."/>
            <person name="Thole S."/>
            <person name="Thompson L."/>
            <person name="Tielen P."/>
            <person name="Tomasch J."/>
            <person name="von Jan M."/>
            <person name="Wanphrut N."/>
            <person name="Wichels A."/>
            <person name="Zech H."/>
            <person name="Simon M."/>
        </authorList>
    </citation>
    <scope>NUCLEOTIDE SEQUENCE [LARGE SCALE GENOMIC DNA]</scope>
    <source>
        <strain>DSM 16493 / NCIMB 14021 / DFL 12</strain>
    </source>
</reference>
<accession>A8LIX8</accession>
<keyword id="KW-0067">ATP-binding</keyword>
<keyword id="KW-0963">Cytoplasm</keyword>
<keyword id="KW-0418">Kinase</keyword>
<keyword id="KW-0460">Magnesium</keyword>
<keyword id="KW-0479">Metal-binding</keyword>
<keyword id="KW-0546">Nucleotide metabolism</keyword>
<keyword id="KW-0547">Nucleotide-binding</keyword>
<keyword id="KW-0597">Phosphoprotein</keyword>
<keyword id="KW-1185">Reference proteome</keyword>
<keyword id="KW-0808">Transferase</keyword>
<feature type="chain" id="PRO_1000080961" description="Nucleoside diphosphate kinase">
    <location>
        <begin position="1"/>
        <end position="140"/>
    </location>
</feature>
<feature type="active site" description="Pros-phosphohistidine intermediate" evidence="1">
    <location>
        <position position="117"/>
    </location>
</feature>
<feature type="binding site" evidence="1">
    <location>
        <position position="11"/>
    </location>
    <ligand>
        <name>ATP</name>
        <dbReference type="ChEBI" id="CHEBI:30616"/>
    </ligand>
</feature>
<feature type="binding site" evidence="1">
    <location>
        <position position="59"/>
    </location>
    <ligand>
        <name>ATP</name>
        <dbReference type="ChEBI" id="CHEBI:30616"/>
    </ligand>
</feature>
<feature type="binding site" evidence="1">
    <location>
        <position position="87"/>
    </location>
    <ligand>
        <name>ATP</name>
        <dbReference type="ChEBI" id="CHEBI:30616"/>
    </ligand>
</feature>
<feature type="binding site" evidence="1">
    <location>
        <position position="93"/>
    </location>
    <ligand>
        <name>ATP</name>
        <dbReference type="ChEBI" id="CHEBI:30616"/>
    </ligand>
</feature>
<feature type="binding site" evidence="1">
    <location>
        <position position="104"/>
    </location>
    <ligand>
        <name>ATP</name>
        <dbReference type="ChEBI" id="CHEBI:30616"/>
    </ligand>
</feature>
<feature type="binding site" evidence="1">
    <location>
        <position position="114"/>
    </location>
    <ligand>
        <name>ATP</name>
        <dbReference type="ChEBI" id="CHEBI:30616"/>
    </ligand>
</feature>
<name>NDK_DINSH</name>
<sequence length="140" mass="15021">MAIERTLSIIKPDATKRNLTGKINAKFEDAGLRIVAQKRIHLTKAQAGVFYAVHAERPFYDELCEFMASEPVVVQVLEGEGAIAKNREVMGATNPADAAPGTIRAEFAESVGENSVHGSDAPETAAVEIAYFFSGLELVG</sequence>
<evidence type="ECO:0000255" key="1">
    <source>
        <dbReference type="HAMAP-Rule" id="MF_00451"/>
    </source>
</evidence>
<gene>
    <name evidence="1" type="primary">ndk</name>
    <name type="ordered locus">Dshi_1350</name>
</gene>